<proteinExistence type="inferred from homology"/>
<dbReference type="EC" id="4.2.1.33" evidence="1"/>
<dbReference type="EMBL" id="CP000655">
    <property type="protein sequence ID" value="ABP33984.1"/>
    <property type="molecule type" value="Genomic_DNA"/>
</dbReference>
<dbReference type="RefSeq" id="WP_011902609.1">
    <property type="nucleotide sequence ID" value="NC_009379.1"/>
</dbReference>
<dbReference type="SMR" id="A4SWX0"/>
<dbReference type="GeneID" id="31481127"/>
<dbReference type="KEGG" id="pnu:Pnuc_0766"/>
<dbReference type="eggNOG" id="COG0066">
    <property type="taxonomic scope" value="Bacteria"/>
</dbReference>
<dbReference type="HOGENOM" id="CLU_081378_0_3_4"/>
<dbReference type="UniPathway" id="UPA00048">
    <property type="reaction ID" value="UER00071"/>
</dbReference>
<dbReference type="Proteomes" id="UP000000231">
    <property type="component" value="Chromosome"/>
</dbReference>
<dbReference type="GO" id="GO:0009316">
    <property type="term" value="C:3-isopropylmalate dehydratase complex"/>
    <property type="evidence" value="ECO:0007669"/>
    <property type="project" value="InterPro"/>
</dbReference>
<dbReference type="GO" id="GO:0003861">
    <property type="term" value="F:3-isopropylmalate dehydratase activity"/>
    <property type="evidence" value="ECO:0007669"/>
    <property type="project" value="UniProtKB-UniRule"/>
</dbReference>
<dbReference type="GO" id="GO:0009098">
    <property type="term" value="P:L-leucine biosynthetic process"/>
    <property type="evidence" value="ECO:0007669"/>
    <property type="project" value="UniProtKB-UniRule"/>
</dbReference>
<dbReference type="CDD" id="cd01577">
    <property type="entry name" value="IPMI_Swivel"/>
    <property type="match status" value="1"/>
</dbReference>
<dbReference type="FunFam" id="3.20.19.10:FF:000003">
    <property type="entry name" value="3-isopropylmalate dehydratase small subunit"/>
    <property type="match status" value="1"/>
</dbReference>
<dbReference type="Gene3D" id="3.20.19.10">
    <property type="entry name" value="Aconitase, domain 4"/>
    <property type="match status" value="1"/>
</dbReference>
<dbReference type="HAMAP" id="MF_01031">
    <property type="entry name" value="LeuD_type1"/>
    <property type="match status" value="1"/>
</dbReference>
<dbReference type="InterPro" id="IPR004431">
    <property type="entry name" value="3-IsopropMal_deHydase_ssu"/>
</dbReference>
<dbReference type="InterPro" id="IPR015928">
    <property type="entry name" value="Aconitase/3IPM_dehydase_swvl"/>
</dbReference>
<dbReference type="InterPro" id="IPR000573">
    <property type="entry name" value="AconitaseA/IPMdHydase_ssu_swvl"/>
</dbReference>
<dbReference type="InterPro" id="IPR033940">
    <property type="entry name" value="IPMI_Swivel"/>
</dbReference>
<dbReference type="InterPro" id="IPR050075">
    <property type="entry name" value="LeuD"/>
</dbReference>
<dbReference type="NCBIfam" id="TIGR00171">
    <property type="entry name" value="leuD"/>
    <property type="match status" value="1"/>
</dbReference>
<dbReference type="NCBIfam" id="NF002458">
    <property type="entry name" value="PRK01641.1"/>
    <property type="match status" value="1"/>
</dbReference>
<dbReference type="PANTHER" id="PTHR43345:SF5">
    <property type="entry name" value="3-ISOPROPYLMALATE DEHYDRATASE SMALL SUBUNIT"/>
    <property type="match status" value="1"/>
</dbReference>
<dbReference type="PANTHER" id="PTHR43345">
    <property type="entry name" value="3-ISOPROPYLMALATE DEHYDRATASE SMALL SUBUNIT 2-RELATED-RELATED"/>
    <property type="match status" value="1"/>
</dbReference>
<dbReference type="Pfam" id="PF00694">
    <property type="entry name" value="Aconitase_C"/>
    <property type="match status" value="1"/>
</dbReference>
<dbReference type="SUPFAM" id="SSF52016">
    <property type="entry name" value="LeuD/IlvD-like"/>
    <property type="match status" value="1"/>
</dbReference>
<organism>
    <name type="scientific">Polynucleobacter asymbioticus (strain DSM 18221 / CIP 109841 / QLW-P1DMWA-1)</name>
    <name type="common">Polynucleobacter necessarius subsp. asymbioticus</name>
    <dbReference type="NCBI Taxonomy" id="312153"/>
    <lineage>
        <taxon>Bacteria</taxon>
        <taxon>Pseudomonadati</taxon>
        <taxon>Pseudomonadota</taxon>
        <taxon>Betaproteobacteria</taxon>
        <taxon>Burkholderiales</taxon>
        <taxon>Burkholderiaceae</taxon>
        <taxon>Polynucleobacter</taxon>
    </lineage>
</organism>
<reference key="1">
    <citation type="journal article" date="2012" name="Stand. Genomic Sci.">
        <title>Complete genome sequence of Polynucleobacter necessarius subsp. asymbioticus type strain (QLW-P1DMWA-1(T)).</title>
        <authorList>
            <person name="Meincke L."/>
            <person name="Copeland A."/>
            <person name="Lapidus A."/>
            <person name="Lucas S."/>
            <person name="Berry K.W."/>
            <person name="Del Rio T.G."/>
            <person name="Hammon N."/>
            <person name="Dalin E."/>
            <person name="Tice H."/>
            <person name="Pitluck S."/>
            <person name="Richardson P."/>
            <person name="Bruce D."/>
            <person name="Goodwin L."/>
            <person name="Han C."/>
            <person name="Tapia R."/>
            <person name="Detter J.C."/>
            <person name="Schmutz J."/>
            <person name="Brettin T."/>
            <person name="Larimer F."/>
            <person name="Land M."/>
            <person name="Hauser L."/>
            <person name="Kyrpides N.C."/>
            <person name="Ivanova N."/>
            <person name="Goker M."/>
            <person name="Woyke T."/>
            <person name="Wu Q.L."/>
            <person name="Pockl M."/>
            <person name="Hahn M.W."/>
            <person name="Klenk H.P."/>
        </authorList>
    </citation>
    <scope>NUCLEOTIDE SEQUENCE [LARGE SCALE GENOMIC DNA]</scope>
    <source>
        <strain>DSM 18221 / CIP 109841 / QLW-P1DMWA-1</strain>
    </source>
</reference>
<evidence type="ECO:0000255" key="1">
    <source>
        <dbReference type="HAMAP-Rule" id="MF_01031"/>
    </source>
</evidence>
<gene>
    <name evidence="1" type="primary">leuD</name>
    <name type="ordered locus">Pnuc_0766</name>
</gene>
<accession>A4SWX0</accession>
<sequence length="215" mass="24363">MEKFTVYKGLVAPLNRENVDTDAIIPKQFLKSIKKTGFGQNLFDEWRYLDHGEPGQDCSTRPINPDFVLNQPRYKGAGILLARKNFGCGSSREHAPWALDQFGFRAVIAPSFADIFYNNCFKNGVLPIVLTEMQVDHLFNETQAFNGYQLTIDLEGQKVITPDGTAYSFDVAPFRKHCLLYGLDDIGLTLQHADKIKAYEAERILKMPWLATQLP</sequence>
<feature type="chain" id="PRO_1000084259" description="3-isopropylmalate dehydratase small subunit">
    <location>
        <begin position="1"/>
        <end position="215"/>
    </location>
</feature>
<keyword id="KW-0028">Amino-acid biosynthesis</keyword>
<keyword id="KW-0100">Branched-chain amino acid biosynthesis</keyword>
<keyword id="KW-0432">Leucine biosynthesis</keyword>
<keyword id="KW-0456">Lyase</keyword>
<keyword id="KW-1185">Reference proteome</keyword>
<name>LEUD_POLAQ</name>
<comment type="function">
    <text evidence="1">Catalyzes the isomerization between 2-isopropylmalate and 3-isopropylmalate, via the formation of 2-isopropylmaleate.</text>
</comment>
<comment type="catalytic activity">
    <reaction evidence="1">
        <text>(2R,3S)-3-isopropylmalate = (2S)-2-isopropylmalate</text>
        <dbReference type="Rhea" id="RHEA:32287"/>
        <dbReference type="ChEBI" id="CHEBI:1178"/>
        <dbReference type="ChEBI" id="CHEBI:35121"/>
        <dbReference type="EC" id="4.2.1.33"/>
    </reaction>
</comment>
<comment type="pathway">
    <text evidence="1">Amino-acid biosynthesis; L-leucine biosynthesis; L-leucine from 3-methyl-2-oxobutanoate: step 2/4.</text>
</comment>
<comment type="subunit">
    <text evidence="1">Heterodimer of LeuC and LeuD.</text>
</comment>
<comment type="similarity">
    <text evidence="1">Belongs to the LeuD family. LeuD type 1 subfamily.</text>
</comment>
<protein>
    <recommendedName>
        <fullName evidence="1">3-isopropylmalate dehydratase small subunit</fullName>
        <ecNumber evidence="1">4.2.1.33</ecNumber>
    </recommendedName>
    <alternativeName>
        <fullName evidence="1">Alpha-IPM isomerase</fullName>
        <shortName evidence="1">IPMI</shortName>
    </alternativeName>
    <alternativeName>
        <fullName evidence="1">Isopropylmalate isomerase</fullName>
    </alternativeName>
</protein>